<protein>
    <recommendedName>
        <fullName>Movement protein TGB3</fullName>
    </recommendedName>
    <alternativeName>
        <fullName>15 kDa protein</fullName>
    </alternativeName>
    <alternativeName>
        <fullName>P15</fullName>
    </alternativeName>
    <alternativeName>
        <fullName>Triple gene block 3 protein</fullName>
        <shortName>TGBp3</shortName>
    </alternativeName>
</protein>
<organismHost>
    <name type="scientific">Beta macrocarpa</name>
    <name type="common">Beet</name>
    <name type="synonym">Beta vulgaris subsp. macrocarpa</name>
    <dbReference type="NCBI Taxonomy" id="343494"/>
</organismHost>
<organismHost>
    <name type="scientific">Beta vulgaris</name>
    <name type="common">Sugar beet</name>
    <dbReference type="NCBI Taxonomy" id="161934"/>
</organismHost>
<organismHost>
    <name type="scientific">Spinacia oleracea</name>
    <name type="common">Spinach</name>
    <dbReference type="NCBI Taxonomy" id="3562"/>
</organismHost>
<keyword id="KW-1031">Host cell junction</keyword>
<keyword id="KW-1038">Host endoplasmic reticulum</keyword>
<keyword id="KW-1043">Host membrane</keyword>
<keyword id="KW-0472">Membrane</keyword>
<keyword id="KW-1185">Reference proteome</keyword>
<keyword id="KW-0812">Transmembrane</keyword>
<keyword id="KW-1133">Transmembrane helix</keyword>
<keyword id="KW-0813">Transport</keyword>
<keyword id="KW-0916">Viral movement protein</keyword>
<dbReference type="EMBL" id="D84411">
    <property type="protein sequence ID" value="BAA12344.1"/>
    <property type="molecule type" value="Genomic_RNA"/>
</dbReference>
<dbReference type="RefSeq" id="NP_612619.1">
    <property type="nucleotide sequence ID" value="NC_003515.1"/>
</dbReference>
<dbReference type="SMR" id="Q65676"/>
<dbReference type="GeneID" id="991086"/>
<dbReference type="KEGG" id="vg:991086"/>
<dbReference type="Proteomes" id="UP000001100">
    <property type="component" value="Genome"/>
</dbReference>
<dbReference type="GO" id="GO:0044167">
    <property type="term" value="C:host cell endoplasmic reticulum membrane"/>
    <property type="evidence" value="ECO:0007669"/>
    <property type="project" value="UniProtKB-SubCell"/>
</dbReference>
<dbReference type="GO" id="GO:0044219">
    <property type="term" value="C:host cell plasmodesma"/>
    <property type="evidence" value="ECO:0007669"/>
    <property type="project" value="UniProtKB-SubCell"/>
</dbReference>
<dbReference type="GO" id="GO:0016020">
    <property type="term" value="C:membrane"/>
    <property type="evidence" value="ECO:0007669"/>
    <property type="project" value="UniProtKB-KW"/>
</dbReference>
<dbReference type="GO" id="GO:0046740">
    <property type="term" value="P:transport of virus in host, cell to cell"/>
    <property type="evidence" value="ECO:0007669"/>
    <property type="project" value="UniProtKB-KW"/>
</dbReference>
<dbReference type="InterPro" id="IPR010470">
    <property type="entry name" value="BNYVV_TGB3"/>
</dbReference>
<dbReference type="Pfam" id="PF06358">
    <property type="entry name" value="BNYVV_TGB3"/>
    <property type="match status" value="1"/>
</dbReference>
<comment type="function">
    <text evidence="1 3">Participates in the transport of viral RNA to the plasmodesmata. TGBp3 most probably contains signals of plasmodesmata targeting is therefore involved in the targeting of TGBp2, and viral RNAs-TGBp1 (RNP complex), to plasmodesmata. Can gate plasmodesmata and increase their size exclusion limit (By similarity).</text>
</comment>
<comment type="subunit">
    <text evidence="1">Interacts with movement proteins TGB1 and TGB2.</text>
</comment>
<comment type="subcellular location">
    <subcellularLocation>
        <location evidence="4">Host cell junction</location>
        <location evidence="4">Host plasmodesma</location>
    </subcellularLocation>
    <subcellularLocation>
        <location evidence="4">Host endoplasmic reticulum membrane</location>
        <topology evidence="4">Multi-pass membrane protein</topology>
    </subcellularLocation>
    <text evidence="4">localizes to plasmodesmata or plasmodesmata-associated membrane compartments called peripheral membrane bodies (PMBs).</text>
</comment>
<comment type="similarity">
    <text evidence="4">Belongs to the benyvirus TGB3 movement protein family.</text>
</comment>
<sequence>MVLVVKVDLSNIVLYIVAGCVVVSMLYSPFFSNDVKASSYAGAVFKGSGCIMDRNSFAQFGSCDIPKHVAESITKVATKEHDADIMVKRGEVTVRVVTLTETLFIILSRLFGLAVFLFMICLMSIVWFWCHR</sequence>
<feature type="chain" id="PRO_0000412277" description="Movement protein TGB3">
    <location>
        <begin position="1"/>
        <end position="132"/>
    </location>
</feature>
<feature type="topological domain" description="Cytoplasmic" evidence="2">
    <location>
        <begin position="1"/>
        <end position="11"/>
    </location>
</feature>
<feature type="transmembrane region" description="Helical" evidence="2">
    <location>
        <begin position="12"/>
        <end position="32"/>
    </location>
</feature>
<feature type="topological domain" description="Lumenal" evidence="2">
    <location>
        <begin position="33"/>
        <end position="109"/>
    </location>
</feature>
<feature type="transmembrane region" description="Helical" evidence="2">
    <location>
        <begin position="110"/>
        <end position="130"/>
    </location>
</feature>
<feature type="topological domain" description="Cytoplasmic" evidence="2">
    <location>
        <begin position="131"/>
        <end position="132"/>
    </location>
</feature>
<reference key="1">
    <citation type="journal article" date="1996" name="Arch. Virol.">
        <title>Complete nucleotide sequence of the Japanese isolate S of beet necrotic yellow vein virus RNA and comparison with European isolates.</title>
        <authorList>
            <person name="Saito M."/>
            <person name="Kiguchi T."/>
            <person name="Kusume T."/>
            <person name="Tamada T."/>
        </authorList>
    </citation>
    <scope>NUCLEOTIDE SEQUENCE [GENOMIC RNA]</scope>
</reference>
<reference key="2">
    <citation type="journal article" date="2000" name="Mol. Plant Microbe Interact.">
        <title>P42 movement protein of Beet necrotic yellow vein virus is targeted by the movement proteins P13 and P15 to punctate bodies associated with plasmodesmata.</title>
        <authorList>
            <person name="Erhardt M."/>
            <person name="Morant M."/>
            <person name="Ritzenthaler C."/>
            <person name="Stussi-Garaud C."/>
            <person name="Guilley H."/>
            <person name="Richards K."/>
            <person name="Jonard G."/>
            <person name="Bouzoubaa S."/>
            <person name="Gilmer D."/>
        </authorList>
    </citation>
    <scope>FUNCTION</scope>
</reference>
<reference key="3">
    <citation type="journal article" date="2005" name="Virology">
        <title>Subcellular localization of the triple gene block movement proteins of Beet necrotic yellow vein virus by electron microscopy.</title>
        <authorList>
            <person name="Erhardt M."/>
            <person name="Vetter G."/>
            <person name="Gilmer D."/>
            <person name="Bouzoubaa S."/>
            <person name="Richards K."/>
            <person name="Jonard G."/>
            <person name="Guilley H."/>
        </authorList>
    </citation>
    <scope>SUBCELLULAR LOCATION</scope>
</reference>
<name>TGB3_BNYVS</name>
<proteinExistence type="inferred from homology"/>
<accession>Q65676</accession>
<evidence type="ECO:0000250" key="1"/>
<evidence type="ECO:0000255" key="2"/>
<evidence type="ECO:0000269" key="3">
    <source>
    </source>
</evidence>
<evidence type="ECO:0000305" key="4"/>
<organism>
    <name type="scientific">Beet necrotic yellow vein virus (isolate Japan/S)</name>
    <name type="common">BNYVV</name>
    <dbReference type="NCBI Taxonomy" id="652670"/>
    <lineage>
        <taxon>Viruses</taxon>
        <taxon>Riboviria</taxon>
        <taxon>Orthornavirae</taxon>
        <taxon>Kitrinoviricota</taxon>
        <taxon>Alsuviricetes</taxon>
        <taxon>Hepelivirales</taxon>
        <taxon>Benyviridae</taxon>
        <taxon>Benyvirus</taxon>
        <taxon>Beet necrotic yellow vein virus</taxon>
    </lineage>
</organism>